<dbReference type="EC" id="7.-.-.-" evidence="1"/>
<dbReference type="EMBL" id="CP000036">
    <property type="protein sequence ID" value="ABB66123.1"/>
    <property type="molecule type" value="Genomic_DNA"/>
</dbReference>
<dbReference type="RefSeq" id="WP_000991815.1">
    <property type="nucleotide sequence ID" value="NC_007613.1"/>
</dbReference>
<dbReference type="KEGG" id="sbo:SBO_1506"/>
<dbReference type="HOGENOM" id="CLU_063448_2_0_6"/>
<dbReference type="Proteomes" id="UP000007067">
    <property type="component" value="Chromosome"/>
</dbReference>
<dbReference type="GO" id="GO:0005886">
    <property type="term" value="C:plasma membrane"/>
    <property type="evidence" value="ECO:0007669"/>
    <property type="project" value="UniProtKB-SubCell"/>
</dbReference>
<dbReference type="GO" id="GO:0051539">
    <property type="term" value="F:4 iron, 4 sulfur cluster binding"/>
    <property type="evidence" value="ECO:0007669"/>
    <property type="project" value="UniProtKB-UniRule"/>
</dbReference>
<dbReference type="GO" id="GO:0009055">
    <property type="term" value="F:electron transfer activity"/>
    <property type="evidence" value="ECO:0007669"/>
    <property type="project" value="InterPro"/>
</dbReference>
<dbReference type="GO" id="GO:0046872">
    <property type="term" value="F:metal ion binding"/>
    <property type="evidence" value="ECO:0007669"/>
    <property type="project" value="UniProtKB-KW"/>
</dbReference>
<dbReference type="GO" id="GO:0022900">
    <property type="term" value="P:electron transport chain"/>
    <property type="evidence" value="ECO:0007669"/>
    <property type="project" value="UniProtKB-UniRule"/>
</dbReference>
<dbReference type="FunFam" id="1.10.15.40:FF:000001">
    <property type="entry name" value="Ion-translocating oxidoreductase complex subunit B"/>
    <property type="match status" value="1"/>
</dbReference>
<dbReference type="Gene3D" id="3.30.70.20">
    <property type="match status" value="1"/>
</dbReference>
<dbReference type="Gene3D" id="1.10.15.40">
    <property type="entry name" value="Electron transport complex subunit B, putative Fe-S cluster"/>
    <property type="match status" value="1"/>
</dbReference>
<dbReference type="HAMAP" id="MF_00463">
    <property type="entry name" value="RsxB_RnfB"/>
    <property type="match status" value="1"/>
</dbReference>
<dbReference type="InterPro" id="IPR007202">
    <property type="entry name" value="4Fe-4S_dom"/>
</dbReference>
<dbReference type="InterPro" id="IPR017896">
    <property type="entry name" value="4Fe4S_Fe-S-bd"/>
</dbReference>
<dbReference type="InterPro" id="IPR017900">
    <property type="entry name" value="4Fe4S_Fe_S_CS"/>
</dbReference>
<dbReference type="InterPro" id="IPR050395">
    <property type="entry name" value="4Fe4S_Ferredoxin_RnfB"/>
</dbReference>
<dbReference type="InterPro" id="IPR010207">
    <property type="entry name" value="Elect_transpt_cplx_RnfB/RsxB"/>
</dbReference>
<dbReference type="InterPro" id="IPR016463">
    <property type="entry name" value="RnfB/RsxB_Proteobac"/>
</dbReference>
<dbReference type="NCBIfam" id="NF003475">
    <property type="entry name" value="PRK05113.1"/>
    <property type="match status" value="1"/>
</dbReference>
<dbReference type="NCBIfam" id="TIGR01944">
    <property type="entry name" value="rnfB"/>
    <property type="match status" value="1"/>
</dbReference>
<dbReference type="PANTHER" id="PTHR43560">
    <property type="entry name" value="ION-TRANSLOCATING OXIDOREDUCTASE COMPLEX SUBUNIT B"/>
    <property type="match status" value="1"/>
</dbReference>
<dbReference type="PANTHER" id="PTHR43560:SF1">
    <property type="entry name" value="ION-TRANSLOCATING OXIDOREDUCTASE COMPLEX SUBUNIT B"/>
    <property type="match status" value="1"/>
</dbReference>
<dbReference type="Pfam" id="PF14697">
    <property type="entry name" value="Fer4_21"/>
    <property type="match status" value="1"/>
</dbReference>
<dbReference type="Pfam" id="PF04060">
    <property type="entry name" value="FeS"/>
    <property type="match status" value="1"/>
</dbReference>
<dbReference type="PIRSF" id="PIRSF005784">
    <property type="entry name" value="Elect_transpt_RnfB"/>
    <property type="match status" value="1"/>
</dbReference>
<dbReference type="SUPFAM" id="SSF54862">
    <property type="entry name" value="4Fe-4S ferredoxins"/>
    <property type="match status" value="1"/>
</dbReference>
<dbReference type="PROSITE" id="PS51656">
    <property type="entry name" value="4FE4S"/>
    <property type="match status" value="1"/>
</dbReference>
<dbReference type="PROSITE" id="PS00198">
    <property type="entry name" value="4FE4S_FER_1"/>
    <property type="match status" value="2"/>
</dbReference>
<dbReference type="PROSITE" id="PS51379">
    <property type="entry name" value="4FE4S_FER_2"/>
    <property type="match status" value="2"/>
</dbReference>
<gene>
    <name evidence="1" type="primary">rsxB</name>
    <name type="ordered locus">SBO_1506</name>
</gene>
<name>RSXB_SHIBS</name>
<comment type="function">
    <text evidence="1">Part of a membrane-bound complex that couples electron transfer with translocation of ions across the membrane. Required to maintain the reduced state of SoxR.</text>
</comment>
<comment type="cofactor">
    <cofactor evidence="1">
        <name>[4Fe-4S] cluster</name>
        <dbReference type="ChEBI" id="CHEBI:49883"/>
    </cofactor>
    <text evidence="1">Binds 3 [4Fe-4S] clusters.</text>
</comment>
<comment type="subunit">
    <text evidence="1">The complex is composed of six subunits: RsxA, RsxB, RsxC, RsxD, RsxE and RsxG.</text>
</comment>
<comment type="subcellular location">
    <subcellularLocation>
        <location evidence="1">Cell inner membrane</location>
    </subcellularLocation>
</comment>
<comment type="similarity">
    <text evidence="1">Belongs to the 4Fe4S bacterial-type ferredoxin family. RnfB subfamily.</text>
</comment>
<reference key="1">
    <citation type="journal article" date="2005" name="Nucleic Acids Res.">
        <title>Genome dynamics and diversity of Shigella species, the etiologic agents of bacillary dysentery.</title>
        <authorList>
            <person name="Yang F."/>
            <person name="Yang J."/>
            <person name="Zhang X."/>
            <person name="Chen L."/>
            <person name="Jiang Y."/>
            <person name="Yan Y."/>
            <person name="Tang X."/>
            <person name="Wang J."/>
            <person name="Xiong Z."/>
            <person name="Dong J."/>
            <person name="Xue Y."/>
            <person name="Zhu Y."/>
            <person name="Xu X."/>
            <person name="Sun L."/>
            <person name="Chen S."/>
            <person name="Nie H."/>
            <person name="Peng J."/>
            <person name="Xu J."/>
            <person name="Wang Y."/>
            <person name="Yuan Z."/>
            <person name="Wen Y."/>
            <person name="Yao Z."/>
            <person name="Shen Y."/>
            <person name="Qiang B."/>
            <person name="Hou Y."/>
            <person name="Yu J."/>
            <person name="Jin Q."/>
        </authorList>
    </citation>
    <scope>NUCLEOTIDE SEQUENCE [LARGE SCALE GENOMIC DNA]</scope>
    <source>
        <strain>Sb227</strain>
    </source>
</reference>
<feature type="chain" id="PRO_1000013658" description="Ion-translocating oxidoreductase complex subunit B">
    <location>
        <begin position="1"/>
        <end position="192"/>
    </location>
</feature>
<feature type="domain" description="4Fe-4S" evidence="1">
    <location>
        <begin position="32"/>
        <end position="91"/>
    </location>
</feature>
<feature type="domain" description="4Fe-4S ferredoxin-type 1" evidence="1">
    <location>
        <begin position="108"/>
        <end position="137"/>
    </location>
</feature>
<feature type="domain" description="4Fe-4S ferredoxin-type 2" evidence="1">
    <location>
        <begin position="138"/>
        <end position="167"/>
    </location>
</feature>
<feature type="region of interest" description="Hydrophobic" evidence="1">
    <location>
        <begin position="1"/>
        <end position="26"/>
    </location>
</feature>
<feature type="binding site" evidence="1">
    <location>
        <position position="49"/>
    </location>
    <ligand>
        <name>[4Fe-4S] cluster</name>
        <dbReference type="ChEBI" id="CHEBI:49883"/>
        <label>1</label>
    </ligand>
</feature>
<feature type="binding site" evidence="1">
    <location>
        <position position="52"/>
    </location>
    <ligand>
        <name>[4Fe-4S] cluster</name>
        <dbReference type="ChEBI" id="CHEBI:49883"/>
        <label>1</label>
    </ligand>
</feature>
<feature type="binding site" evidence="1">
    <location>
        <position position="57"/>
    </location>
    <ligand>
        <name>[4Fe-4S] cluster</name>
        <dbReference type="ChEBI" id="CHEBI:49883"/>
        <label>1</label>
    </ligand>
</feature>
<feature type="binding site" evidence="1">
    <location>
        <position position="74"/>
    </location>
    <ligand>
        <name>[4Fe-4S] cluster</name>
        <dbReference type="ChEBI" id="CHEBI:49883"/>
        <label>1</label>
    </ligand>
</feature>
<feature type="binding site" evidence="1">
    <location>
        <position position="117"/>
    </location>
    <ligand>
        <name>[4Fe-4S] cluster</name>
        <dbReference type="ChEBI" id="CHEBI:49883"/>
        <label>2</label>
    </ligand>
</feature>
<feature type="binding site" evidence="1">
    <location>
        <position position="120"/>
    </location>
    <ligand>
        <name>[4Fe-4S] cluster</name>
        <dbReference type="ChEBI" id="CHEBI:49883"/>
        <label>2</label>
    </ligand>
</feature>
<feature type="binding site" evidence="1">
    <location>
        <position position="123"/>
    </location>
    <ligand>
        <name>[4Fe-4S] cluster</name>
        <dbReference type="ChEBI" id="CHEBI:49883"/>
        <label>2</label>
    </ligand>
</feature>
<feature type="binding site" evidence="1">
    <location>
        <position position="127"/>
    </location>
    <ligand>
        <name>[4Fe-4S] cluster</name>
        <dbReference type="ChEBI" id="CHEBI:49883"/>
        <label>3</label>
    </ligand>
</feature>
<feature type="binding site" evidence="1">
    <location>
        <position position="147"/>
    </location>
    <ligand>
        <name>[4Fe-4S] cluster</name>
        <dbReference type="ChEBI" id="CHEBI:49883"/>
        <label>3</label>
    </ligand>
</feature>
<feature type="binding site" evidence="1">
    <location>
        <position position="150"/>
    </location>
    <ligand>
        <name>[4Fe-4S] cluster</name>
        <dbReference type="ChEBI" id="CHEBI:49883"/>
        <label>3</label>
    </ligand>
</feature>
<feature type="binding site" evidence="1">
    <location>
        <position position="153"/>
    </location>
    <ligand>
        <name>[4Fe-4S] cluster</name>
        <dbReference type="ChEBI" id="CHEBI:49883"/>
        <label>3</label>
    </ligand>
</feature>
<feature type="binding site" evidence="1">
    <location>
        <position position="157"/>
    </location>
    <ligand>
        <name>[4Fe-4S] cluster</name>
        <dbReference type="ChEBI" id="CHEBI:49883"/>
        <label>2</label>
    </ligand>
</feature>
<organism>
    <name type="scientific">Shigella boydii serotype 4 (strain Sb227)</name>
    <dbReference type="NCBI Taxonomy" id="300268"/>
    <lineage>
        <taxon>Bacteria</taxon>
        <taxon>Pseudomonadati</taxon>
        <taxon>Pseudomonadota</taxon>
        <taxon>Gammaproteobacteria</taxon>
        <taxon>Enterobacterales</taxon>
        <taxon>Enterobacteriaceae</taxon>
        <taxon>Shigella</taxon>
    </lineage>
</organism>
<evidence type="ECO:0000255" key="1">
    <source>
        <dbReference type="HAMAP-Rule" id="MF_00463"/>
    </source>
</evidence>
<proteinExistence type="inferred from homology"/>
<keyword id="KW-0004">4Fe-4S</keyword>
<keyword id="KW-0997">Cell inner membrane</keyword>
<keyword id="KW-1003">Cell membrane</keyword>
<keyword id="KW-0249">Electron transport</keyword>
<keyword id="KW-0408">Iron</keyword>
<keyword id="KW-0411">Iron-sulfur</keyword>
<keyword id="KW-0472">Membrane</keyword>
<keyword id="KW-0479">Metal-binding</keyword>
<keyword id="KW-0677">Repeat</keyword>
<keyword id="KW-1278">Translocase</keyword>
<keyword id="KW-0813">Transport</keyword>
<accession>Q320Y5</accession>
<protein>
    <recommendedName>
        <fullName evidence="1">Ion-translocating oxidoreductase complex subunit B</fullName>
        <ecNumber evidence="1">7.-.-.-</ecNumber>
    </recommendedName>
    <alternativeName>
        <fullName evidence="1">Rsx electron transport complex subunit B</fullName>
    </alternativeName>
</protein>
<sequence length="192" mass="20572">MNAIWIAVAAVSLLGLAFGAILGYASRRFAVEDDPVVEKIDEILPQSQCGQCGYPGCRPYAEAISCNGEKINRCAPGGEAVMLKIAELLNVEPQPLDGEAQELTPARMVAVIDENNCIGCTKCIQACPVDAIVGATRVMHTVMSDLCTGCNLCVDPCPTHCISLQPVAETPDSWKWDLNTIPVRIIPVEHHA</sequence>